<comment type="function">
    <text evidence="1">Thiolesterase that catalyzes the hydrolysis of S-D-lactoyl-glutathione to form glutathione and D-lactic acid.</text>
</comment>
<comment type="catalytic activity">
    <reaction evidence="1">
        <text>an S-(2-hydroxyacyl)glutathione + H2O = a 2-hydroxy carboxylate + glutathione + H(+)</text>
        <dbReference type="Rhea" id="RHEA:21864"/>
        <dbReference type="ChEBI" id="CHEBI:15377"/>
        <dbReference type="ChEBI" id="CHEBI:15378"/>
        <dbReference type="ChEBI" id="CHEBI:57925"/>
        <dbReference type="ChEBI" id="CHEBI:58896"/>
        <dbReference type="ChEBI" id="CHEBI:71261"/>
        <dbReference type="EC" id="3.1.2.6"/>
    </reaction>
</comment>
<comment type="cofactor">
    <cofactor evidence="1">
        <name>Zn(2+)</name>
        <dbReference type="ChEBI" id="CHEBI:29105"/>
    </cofactor>
    <text evidence="1">Binds 2 Zn(2+) ions per subunit.</text>
</comment>
<comment type="pathway">
    <text evidence="1">Secondary metabolite metabolism; methylglyoxal degradation; (R)-lactate from methylglyoxal: step 2/2.</text>
</comment>
<comment type="subunit">
    <text evidence="1">Monomer.</text>
</comment>
<comment type="similarity">
    <text evidence="1">Belongs to the metallo-beta-lactamase superfamily. Glyoxalase II family.</text>
</comment>
<evidence type="ECO:0000255" key="1">
    <source>
        <dbReference type="HAMAP-Rule" id="MF_01374"/>
    </source>
</evidence>
<reference key="1">
    <citation type="journal article" date="2008" name="J. Bacteriol.">
        <title>The complete genome sequence of Escherichia coli DH10B: insights into the biology of a laboratory workhorse.</title>
        <authorList>
            <person name="Durfee T."/>
            <person name="Nelson R."/>
            <person name="Baldwin S."/>
            <person name="Plunkett G. III"/>
            <person name="Burland V."/>
            <person name="Mau B."/>
            <person name="Petrosino J.F."/>
            <person name="Qin X."/>
            <person name="Muzny D.M."/>
            <person name="Ayele M."/>
            <person name="Gibbs R.A."/>
            <person name="Csorgo B."/>
            <person name="Posfai G."/>
            <person name="Weinstock G.M."/>
            <person name="Blattner F.R."/>
        </authorList>
    </citation>
    <scope>NUCLEOTIDE SEQUENCE [LARGE SCALE GENOMIC DNA]</scope>
    <source>
        <strain>K12 / DH10B</strain>
    </source>
</reference>
<gene>
    <name evidence="1" type="primary">gloB</name>
    <name type="ordered locus">ECDH10B_0193</name>
</gene>
<proteinExistence type="inferred from homology"/>
<sequence length="251" mass="28434">MNLNSIPAFDDNYIWVLNDEAGRCLIVDPGDAEPVLNAIAANNWQPEAIFLTHHHHDHVGGVKELVEKFPQIVVYGPQETQDKGTTQVVKDGETAFVLGHEFSVIATPGHTLGHICYFSKPYLFCGDTLFSGGCGRLFEGTASQMYQSLKKLSALPDDTLVCCAHEYTLSNMKFALSILPHDLSINDYYRKVKELRAKNQITLPVILKNERQINVFLRTEDIDLINVINEETLLQQPEERFAWLRSKKDRF</sequence>
<name>GLO2_ECODH</name>
<organism>
    <name type="scientific">Escherichia coli (strain K12 / DH10B)</name>
    <dbReference type="NCBI Taxonomy" id="316385"/>
    <lineage>
        <taxon>Bacteria</taxon>
        <taxon>Pseudomonadati</taxon>
        <taxon>Pseudomonadota</taxon>
        <taxon>Gammaproteobacteria</taxon>
        <taxon>Enterobacterales</taxon>
        <taxon>Enterobacteriaceae</taxon>
        <taxon>Escherichia</taxon>
    </lineage>
</organism>
<protein>
    <recommendedName>
        <fullName evidence="1">Hydroxyacylglutathione hydrolase</fullName>
        <ecNumber evidence="1">3.1.2.6</ecNumber>
    </recommendedName>
    <alternativeName>
        <fullName evidence="1">Glyoxalase II</fullName>
        <shortName evidence="1">Glx II</shortName>
    </alternativeName>
</protein>
<feature type="chain" id="PRO_1000144762" description="Hydroxyacylglutathione hydrolase">
    <location>
        <begin position="1"/>
        <end position="251"/>
    </location>
</feature>
<feature type="binding site" evidence="1">
    <location>
        <position position="53"/>
    </location>
    <ligand>
        <name>Zn(2+)</name>
        <dbReference type="ChEBI" id="CHEBI:29105"/>
        <label>1</label>
    </ligand>
</feature>
<feature type="binding site" evidence="1">
    <location>
        <position position="55"/>
    </location>
    <ligand>
        <name>Zn(2+)</name>
        <dbReference type="ChEBI" id="CHEBI:29105"/>
        <label>1</label>
    </ligand>
</feature>
<feature type="binding site" evidence="1">
    <location>
        <position position="57"/>
    </location>
    <ligand>
        <name>Zn(2+)</name>
        <dbReference type="ChEBI" id="CHEBI:29105"/>
        <label>2</label>
    </ligand>
</feature>
<feature type="binding site" evidence="1">
    <location>
        <position position="58"/>
    </location>
    <ligand>
        <name>Zn(2+)</name>
        <dbReference type="ChEBI" id="CHEBI:29105"/>
        <label>2</label>
    </ligand>
</feature>
<feature type="binding site" evidence="1">
    <location>
        <position position="110"/>
    </location>
    <ligand>
        <name>Zn(2+)</name>
        <dbReference type="ChEBI" id="CHEBI:29105"/>
        <label>1</label>
    </ligand>
</feature>
<feature type="binding site" evidence="1">
    <location>
        <position position="127"/>
    </location>
    <ligand>
        <name>Zn(2+)</name>
        <dbReference type="ChEBI" id="CHEBI:29105"/>
        <label>1</label>
    </ligand>
</feature>
<feature type="binding site" evidence="1">
    <location>
        <position position="127"/>
    </location>
    <ligand>
        <name>Zn(2+)</name>
        <dbReference type="ChEBI" id="CHEBI:29105"/>
        <label>2</label>
    </ligand>
</feature>
<feature type="binding site" evidence="1">
    <location>
        <position position="165"/>
    </location>
    <ligand>
        <name>Zn(2+)</name>
        <dbReference type="ChEBI" id="CHEBI:29105"/>
        <label>2</label>
    </ligand>
</feature>
<dbReference type="EC" id="3.1.2.6" evidence="1"/>
<dbReference type="EMBL" id="CP000948">
    <property type="protein sequence ID" value="ACB01385.1"/>
    <property type="molecule type" value="Genomic_DNA"/>
</dbReference>
<dbReference type="RefSeq" id="WP_001052715.1">
    <property type="nucleotide sequence ID" value="NC_010473.1"/>
</dbReference>
<dbReference type="SMR" id="B1XD76"/>
<dbReference type="KEGG" id="ecd:ECDH10B_0193"/>
<dbReference type="HOGENOM" id="CLU_030571_4_1_6"/>
<dbReference type="UniPathway" id="UPA00619">
    <property type="reaction ID" value="UER00676"/>
</dbReference>
<dbReference type="GO" id="GO:0004416">
    <property type="term" value="F:hydroxyacylglutathione hydrolase activity"/>
    <property type="evidence" value="ECO:0007669"/>
    <property type="project" value="UniProtKB-UniRule"/>
</dbReference>
<dbReference type="GO" id="GO:0046872">
    <property type="term" value="F:metal ion binding"/>
    <property type="evidence" value="ECO:0007669"/>
    <property type="project" value="UniProtKB-KW"/>
</dbReference>
<dbReference type="GO" id="GO:0019243">
    <property type="term" value="P:methylglyoxal catabolic process to D-lactate via S-lactoyl-glutathione"/>
    <property type="evidence" value="ECO:0007669"/>
    <property type="project" value="InterPro"/>
</dbReference>
<dbReference type="CDD" id="cd07723">
    <property type="entry name" value="hydroxyacylglutathione_hydrolase_MBL-fold"/>
    <property type="match status" value="1"/>
</dbReference>
<dbReference type="FunFam" id="3.60.15.10:FF:000012">
    <property type="entry name" value="Hydroxyacylglutathione hydrolase"/>
    <property type="match status" value="1"/>
</dbReference>
<dbReference type="Gene3D" id="3.60.15.10">
    <property type="entry name" value="Ribonuclease Z/Hydroxyacylglutathione hydrolase-like"/>
    <property type="match status" value="1"/>
</dbReference>
<dbReference type="HAMAP" id="MF_01374">
    <property type="entry name" value="Glyoxalase_2"/>
    <property type="match status" value="1"/>
</dbReference>
<dbReference type="InterPro" id="IPR035680">
    <property type="entry name" value="Clx_II_MBL"/>
</dbReference>
<dbReference type="InterPro" id="IPR050110">
    <property type="entry name" value="Glyoxalase_II_hydrolase"/>
</dbReference>
<dbReference type="InterPro" id="IPR032282">
    <property type="entry name" value="HAGH_C"/>
</dbReference>
<dbReference type="InterPro" id="IPR017782">
    <property type="entry name" value="Hydroxyacylglutathione_Hdrlase"/>
</dbReference>
<dbReference type="InterPro" id="IPR001279">
    <property type="entry name" value="Metallo-B-lactamas"/>
</dbReference>
<dbReference type="InterPro" id="IPR036866">
    <property type="entry name" value="RibonucZ/Hydroxyglut_hydro"/>
</dbReference>
<dbReference type="NCBIfam" id="TIGR03413">
    <property type="entry name" value="GSH_gloB"/>
    <property type="match status" value="1"/>
</dbReference>
<dbReference type="NCBIfam" id="NF007597">
    <property type="entry name" value="PRK10241.1"/>
    <property type="match status" value="1"/>
</dbReference>
<dbReference type="PANTHER" id="PTHR43705">
    <property type="entry name" value="HYDROXYACYLGLUTATHIONE HYDROLASE"/>
    <property type="match status" value="1"/>
</dbReference>
<dbReference type="PANTHER" id="PTHR43705:SF1">
    <property type="entry name" value="HYDROXYACYLGLUTATHIONE HYDROLASE GLOB"/>
    <property type="match status" value="1"/>
</dbReference>
<dbReference type="Pfam" id="PF16123">
    <property type="entry name" value="HAGH_C"/>
    <property type="match status" value="1"/>
</dbReference>
<dbReference type="Pfam" id="PF00753">
    <property type="entry name" value="Lactamase_B"/>
    <property type="match status" value="1"/>
</dbReference>
<dbReference type="PIRSF" id="PIRSF005457">
    <property type="entry name" value="Glx"/>
    <property type="match status" value="1"/>
</dbReference>
<dbReference type="SMART" id="SM00849">
    <property type="entry name" value="Lactamase_B"/>
    <property type="match status" value="1"/>
</dbReference>
<dbReference type="SUPFAM" id="SSF56281">
    <property type="entry name" value="Metallo-hydrolase/oxidoreductase"/>
    <property type="match status" value="1"/>
</dbReference>
<accession>B1XD76</accession>
<keyword id="KW-0378">Hydrolase</keyword>
<keyword id="KW-0479">Metal-binding</keyword>
<keyword id="KW-0862">Zinc</keyword>